<feature type="chain" id="PRO_0000126249" description="Large ribosomal subunit protein bL36">
    <location>
        <begin position="1"/>
        <end position="41"/>
    </location>
</feature>
<name>RL36_RICPR</name>
<sequence length="41" mass="4861">MKVVSSLKSLKKRDKDCQIVKRRGKIFVINKKNKRFRAKQG</sequence>
<protein>
    <recommendedName>
        <fullName evidence="1">Large ribosomal subunit protein bL36</fullName>
    </recommendedName>
    <alternativeName>
        <fullName evidence="2">50S ribosomal protein L36</fullName>
    </alternativeName>
</protein>
<reference key="1">
    <citation type="journal article" date="1998" name="Nature">
        <title>The genome sequence of Rickettsia prowazekii and the origin of mitochondria.</title>
        <authorList>
            <person name="Andersson S.G.E."/>
            <person name="Zomorodipour A."/>
            <person name="Andersson J.O."/>
            <person name="Sicheritz-Ponten T."/>
            <person name="Alsmark U.C.M."/>
            <person name="Podowski R.M."/>
            <person name="Naeslund A.K."/>
            <person name="Eriksson A.-S."/>
            <person name="Winkler H.H."/>
            <person name="Kurland C.G."/>
        </authorList>
    </citation>
    <scope>NUCLEOTIDE SEQUENCE [LARGE SCALE GENOMIC DNA]</scope>
    <source>
        <strain>Madrid E</strain>
    </source>
</reference>
<gene>
    <name evidence="1" type="primary">rpmJ</name>
    <name type="ordered locus">RP456</name>
</gene>
<proteinExistence type="inferred from homology"/>
<comment type="similarity">
    <text evidence="1">Belongs to the bacterial ribosomal protein bL36 family.</text>
</comment>
<organism>
    <name type="scientific">Rickettsia prowazekii (strain Madrid E)</name>
    <dbReference type="NCBI Taxonomy" id="272947"/>
    <lineage>
        <taxon>Bacteria</taxon>
        <taxon>Pseudomonadati</taxon>
        <taxon>Pseudomonadota</taxon>
        <taxon>Alphaproteobacteria</taxon>
        <taxon>Rickettsiales</taxon>
        <taxon>Rickettsiaceae</taxon>
        <taxon>Rickettsieae</taxon>
        <taxon>Rickettsia</taxon>
        <taxon>typhus group</taxon>
    </lineage>
</organism>
<evidence type="ECO:0000255" key="1">
    <source>
        <dbReference type="HAMAP-Rule" id="MF_00251"/>
    </source>
</evidence>
<evidence type="ECO:0000305" key="2"/>
<keyword id="KW-1185">Reference proteome</keyword>
<keyword id="KW-0687">Ribonucleoprotein</keyword>
<keyword id="KW-0689">Ribosomal protein</keyword>
<dbReference type="EMBL" id="AJ235271">
    <property type="protein sequence ID" value="CAA14912.1"/>
    <property type="molecule type" value="Genomic_DNA"/>
</dbReference>
<dbReference type="PIR" id="F71704">
    <property type="entry name" value="F71704"/>
</dbReference>
<dbReference type="RefSeq" id="NP_220836.1">
    <property type="nucleotide sequence ID" value="NC_000963.1"/>
</dbReference>
<dbReference type="SMR" id="Q9ZD87"/>
<dbReference type="STRING" id="272947.gene:17555536"/>
<dbReference type="EnsemblBacteria" id="CAA14912">
    <property type="protein sequence ID" value="CAA14912"/>
    <property type="gene ID" value="CAA14912"/>
</dbReference>
<dbReference type="KEGG" id="rpr:RP456"/>
<dbReference type="PATRIC" id="fig|272947.5.peg.468"/>
<dbReference type="eggNOG" id="COG0257">
    <property type="taxonomic scope" value="Bacteria"/>
</dbReference>
<dbReference type="HOGENOM" id="CLU_135723_3_2_5"/>
<dbReference type="Proteomes" id="UP000002480">
    <property type="component" value="Chromosome"/>
</dbReference>
<dbReference type="GO" id="GO:1990904">
    <property type="term" value="C:ribonucleoprotein complex"/>
    <property type="evidence" value="ECO:0007669"/>
    <property type="project" value="UniProtKB-KW"/>
</dbReference>
<dbReference type="GO" id="GO:0005840">
    <property type="term" value="C:ribosome"/>
    <property type="evidence" value="ECO:0007669"/>
    <property type="project" value="UniProtKB-KW"/>
</dbReference>
<dbReference type="GO" id="GO:0003735">
    <property type="term" value="F:structural constituent of ribosome"/>
    <property type="evidence" value="ECO:0007669"/>
    <property type="project" value="InterPro"/>
</dbReference>
<dbReference type="GO" id="GO:0006412">
    <property type="term" value="P:translation"/>
    <property type="evidence" value="ECO:0007669"/>
    <property type="project" value="UniProtKB-UniRule"/>
</dbReference>
<dbReference type="HAMAP" id="MF_00251">
    <property type="entry name" value="Ribosomal_bL36"/>
    <property type="match status" value="1"/>
</dbReference>
<dbReference type="InterPro" id="IPR000473">
    <property type="entry name" value="Ribosomal_bL36"/>
</dbReference>
<dbReference type="InterPro" id="IPR035977">
    <property type="entry name" value="Ribosomal_bL36_sp"/>
</dbReference>
<dbReference type="InterPro" id="IPR047621">
    <property type="entry name" value="Ribosomal_L36_bact"/>
</dbReference>
<dbReference type="NCBIfam" id="NF002021">
    <property type="entry name" value="PRK00831.1"/>
    <property type="match status" value="1"/>
</dbReference>
<dbReference type="PANTHER" id="PTHR47781">
    <property type="entry name" value="50S RIBOSOMAL PROTEIN L36 2"/>
    <property type="match status" value="1"/>
</dbReference>
<dbReference type="PANTHER" id="PTHR47781:SF1">
    <property type="entry name" value="LARGE RIBOSOMAL SUBUNIT PROTEIN BL36B"/>
    <property type="match status" value="1"/>
</dbReference>
<dbReference type="Pfam" id="PF00444">
    <property type="entry name" value="Ribosomal_L36"/>
    <property type="match status" value="1"/>
</dbReference>
<dbReference type="SUPFAM" id="SSF57840">
    <property type="entry name" value="Ribosomal protein L36"/>
    <property type="match status" value="1"/>
</dbReference>
<dbReference type="PROSITE" id="PS00828">
    <property type="entry name" value="RIBOSOMAL_L36"/>
    <property type="match status" value="1"/>
</dbReference>
<accession>Q9ZD87</accession>